<gene>
    <name type="primary">Pde4a</name>
</gene>
<reference key="1">
    <citation type="journal article" date="2000" name="Mamm. Genome">
        <title>Physical mapping and promoter structure of the murine cAMP-specific phosphodiesterase pde4a gene.</title>
        <authorList>
            <person name="Olsen A.E."/>
            <person name="Bolger G.B."/>
        </authorList>
    </citation>
    <scope>NUCLEOTIDE SEQUENCE [GENOMIC DNA]</scope>
    <scope>ALTERNATIVE SPLICING</scope>
    <source>
        <tissue>Embryonic stem cell</tissue>
    </source>
</reference>
<reference key="2">
    <citation type="journal article" date="2001" name="Biochim. Biophys. Acta">
        <title>Diazepam and rolipram differentially inhibit cyclic AMP-specific phosphodiesterases PDE4A1 and PDE4B3 in the mouse.</title>
        <authorList>
            <person name="Cherry J.A."/>
            <person name="Thompson B.E."/>
            <person name="Pho V."/>
        </authorList>
    </citation>
    <scope>NUCLEOTIDE SEQUENCE [MRNA] (ISOFORM 2)</scope>
    <scope>FUNCTION (ISOFORM 2)</scope>
    <scope>CATALYTIC ACTIVITY (ISOFORM 2)</scope>
    <scope>ACTIVITY REGULATION (ISOFORM 2)</scope>
    <scope>BIOPHYSICOCHEMICAL PROPERTIES (ISOFORM 2)</scope>
    <scope>PATHWAY</scope>
    <source>
        <strain>Swiss Webster</strain>
        <tissue>Brain</tissue>
    </source>
</reference>
<reference key="3">
    <citation type="journal article" date="2004" name="Genome Res.">
        <title>The status, quality, and expansion of the NIH full-length cDNA project: the Mammalian Gene Collection (MGC).</title>
        <authorList>
            <consortium name="The MGC Project Team"/>
        </authorList>
    </citation>
    <scope>NUCLEOTIDE SEQUENCE [LARGE SCALE MRNA] (ISOFORM 3)</scope>
    <source>
        <strain>FVB/N</strain>
        <tissue>Salivary gland</tissue>
    </source>
</reference>
<reference key="4">
    <citation type="journal article" date="1998" name="Biochem. J.">
        <title>Identification and characterization of the human homologue of the short PDE4A cAMP-specific phosphodiesterase 4A variant RD1 (PDE4A1) by analysis of the human HSPDE4A gene locus located at chromosome 19p13.2.</title>
        <authorList>
            <person name="Sullivan M."/>
            <person name="Rena G."/>
            <person name="Begg F."/>
            <person name="Gordon L."/>
            <person name="Olsen A.S."/>
            <person name="Houslay M.D."/>
        </authorList>
    </citation>
    <scope>NUCLEOTIDE SEQUENCE [MRNA] OF 248-355 (ISOFORM 2)</scope>
    <source>
        <tissue>Brain</tissue>
    </source>
</reference>
<reference key="5">
    <citation type="journal article" date="2010" name="Cell">
        <title>A tissue-specific atlas of mouse protein phosphorylation and expression.</title>
        <authorList>
            <person name="Huttlin E.L."/>
            <person name="Jedrychowski M.P."/>
            <person name="Elias J.E."/>
            <person name="Goswami T."/>
            <person name="Rad R."/>
            <person name="Beausoleil S.A."/>
            <person name="Villen J."/>
            <person name="Haas W."/>
            <person name="Sowa M.E."/>
            <person name="Gygi S.P."/>
        </authorList>
    </citation>
    <scope>PHOSPHORYLATION [LARGE SCALE ANALYSIS] AT SER-147 AND SER-333</scope>
    <scope>IDENTIFICATION BY MASS SPECTROMETRY [LARGE SCALE ANALYSIS]</scope>
    <source>
        <tissue>Brain</tissue>
        <tissue>Brown adipose tissue</tissue>
        <tissue>Heart</tissue>
        <tissue>Spleen</tissue>
        <tissue>Testis</tissue>
    </source>
</reference>
<proteinExistence type="evidence at protein level"/>
<protein>
    <recommendedName>
        <fullName evidence="12">3',5'-cyclic-AMP phosphodiesterase 4A</fullName>
        <ecNumber evidence="8">3.1.4.53</ecNumber>
    </recommendedName>
    <alternativeName>
        <fullName evidence="12">cAMP-specific phosphodiesterase 4A</fullName>
    </alternativeName>
</protein>
<keyword id="KW-0025">Alternative splicing</keyword>
<keyword id="KW-0114">cAMP</keyword>
<keyword id="KW-0963">Cytoplasm</keyword>
<keyword id="KW-0378">Hydrolase</keyword>
<keyword id="KW-1017">Isopeptide bond</keyword>
<keyword id="KW-0460">Magnesium</keyword>
<keyword id="KW-0464">Manganese</keyword>
<keyword id="KW-0472">Membrane</keyword>
<keyword id="KW-0479">Metal-binding</keyword>
<keyword id="KW-0597">Phosphoprotein</keyword>
<keyword id="KW-1185">Reference proteome</keyword>
<keyword id="KW-0832">Ubl conjugation</keyword>
<keyword id="KW-0862">Zinc</keyword>
<dbReference type="EC" id="3.1.4.53" evidence="8"/>
<dbReference type="EMBL" id="AF142646">
    <property type="protein sequence ID" value="AAF14519.1"/>
    <property type="molecule type" value="Genomic_DNA"/>
</dbReference>
<dbReference type="EMBL" id="AF142643">
    <property type="protein sequence ID" value="AAF14519.1"/>
    <property type="status" value="JOINED"/>
    <property type="molecule type" value="Genomic_DNA"/>
</dbReference>
<dbReference type="EMBL" id="AF142644">
    <property type="protein sequence ID" value="AAF14519.1"/>
    <property type="status" value="JOINED"/>
    <property type="molecule type" value="Genomic_DNA"/>
</dbReference>
<dbReference type="EMBL" id="AF142645">
    <property type="protein sequence ID" value="AAF14519.1"/>
    <property type="status" value="JOINED"/>
    <property type="molecule type" value="Genomic_DNA"/>
</dbReference>
<dbReference type="EMBL" id="AF142646">
    <property type="protein sequence ID" value="AAF14520.1"/>
    <property type="molecule type" value="Genomic_DNA"/>
</dbReference>
<dbReference type="EMBL" id="AF142644">
    <property type="protein sequence ID" value="AAF14520.1"/>
    <property type="status" value="JOINED"/>
    <property type="molecule type" value="Genomic_DNA"/>
</dbReference>
<dbReference type="EMBL" id="AF142645">
    <property type="protein sequence ID" value="AAF14520.1"/>
    <property type="status" value="JOINED"/>
    <property type="molecule type" value="Genomic_DNA"/>
</dbReference>
<dbReference type="EMBL" id="AF208021">
    <property type="protein sequence ID" value="AAF19201.2"/>
    <property type="molecule type" value="mRNA"/>
</dbReference>
<dbReference type="EMBL" id="AJ297396">
    <property type="protein sequence ID" value="CAB96769.1"/>
    <property type="molecule type" value="mRNA"/>
</dbReference>
<dbReference type="EMBL" id="BC027224">
    <property type="protein sequence ID" value="AAH27224.2"/>
    <property type="status" value="ALT_INIT"/>
    <property type="molecule type" value="mRNA"/>
</dbReference>
<dbReference type="EMBL" id="U97586">
    <property type="protein sequence ID" value="AAC25681.1"/>
    <property type="molecule type" value="mRNA"/>
</dbReference>
<dbReference type="CCDS" id="CCDS22895.1">
    <molecule id="O89084-1"/>
</dbReference>
<dbReference type="CCDS" id="CCDS22896.1">
    <molecule id="O89084-2"/>
</dbReference>
<dbReference type="CCDS" id="CCDS80964.1">
    <molecule id="O89084-3"/>
</dbReference>
<dbReference type="RefSeq" id="NP_001297679.1">
    <molecule id="O89084-3"/>
    <property type="nucleotide sequence ID" value="NM_001310750.2"/>
</dbReference>
<dbReference type="RefSeq" id="NP_001396221.1">
    <molecule id="O89084-2"/>
    <property type="nucleotide sequence ID" value="NM_001409292.1"/>
</dbReference>
<dbReference type="RefSeq" id="NP_062772.3">
    <molecule id="O89084-2"/>
    <property type="nucleotide sequence ID" value="NM_019798.5"/>
</dbReference>
<dbReference type="RefSeq" id="NP_899668.1">
    <molecule id="O89084-1"/>
    <property type="nucleotide sequence ID" value="NM_183408.4"/>
</dbReference>
<dbReference type="SMR" id="O89084"/>
<dbReference type="BioGRID" id="202078">
    <property type="interactions" value="4"/>
</dbReference>
<dbReference type="CORUM" id="O89084"/>
<dbReference type="FunCoup" id="O89084">
    <property type="interactions" value="1058"/>
</dbReference>
<dbReference type="IntAct" id="O89084">
    <property type="interactions" value="2"/>
</dbReference>
<dbReference type="STRING" id="10090.ENSMUSP00000037025"/>
<dbReference type="BindingDB" id="O89084"/>
<dbReference type="ChEMBL" id="CHEMBL2111373"/>
<dbReference type="GlyGen" id="O89084">
    <property type="glycosylation" value="2 sites"/>
</dbReference>
<dbReference type="iPTMnet" id="O89084"/>
<dbReference type="PhosphoSitePlus" id="O89084"/>
<dbReference type="jPOST" id="O89084"/>
<dbReference type="PaxDb" id="10090-ENSMUSP00000037025"/>
<dbReference type="ProteomicsDB" id="287806">
    <molecule id="O89084-1"/>
</dbReference>
<dbReference type="ProteomicsDB" id="287807">
    <molecule id="O89084-2"/>
</dbReference>
<dbReference type="ProteomicsDB" id="287808">
    <molecule id="O89084-3"/>
</dbReference>
<dbReference type="Pumba" id="O89084"/>
<dbReference type="Antibodypedia" id="4321">
    <property type="antibodies" value="550 antibodies from 27 providers"/>
</dbReference>
<dbReference type="DNASU" id="18577"/>
<dbReference type="Ensembl" id="ENSMUST00000003395.10">
    <molecule id="O89084-2"/>
    <property type="protein sequence ID" value="ENSMUSP00000003395.10"/>
    <property type="gene ID" value="ENSMUSG00000032177.19"/>
</dbReference>
<dbReference type="Ensembl" id="ENSMUST00000039413.15">
    <molecule id="O89084-1"/>
    <property type="protein sequence ID" value="ENSMUSP00000037025.9"/>
    <property type="gene ID" value="ENSMUSG00000032177.19"/>
</dbReference>
<dbReference type="Ensembl" id="ENSMUST00000115458.9">
    <molecule id="O89084-3"/>
    <property type="protein sequence ID" value="ENSMUSP00000111118.3"/>
    <property type="gene ID" value="ENSMUSG00000032177.19"/>
</dbReference>
<dbReference type="GeneID" id="18577"/>
<dbReference type="KEGG" id="mmu:18577"/>
<dbReference type="UCSC" id="uc009oki.2">
    <molecule id="O89084-1"/>
    <property type="organism name" value="mouse"/>
</dbReference>
<dbReference type="UCSC" id="uc009okl.2">
    <molecule id="O89084-3"/>
    <property type="organism name" value="mouse"/>
</dbReference>
<dbReference type="UCSC" id="uc009okm.2">
    <molecule id="O89084-2"/>
    <property type="organism name" value="mouse"/>
</dbReference>
<dbReference type="AGR" id="MGI:99558"/>
<dbReference type="CTD" id="5141"/>
<dbReference type="MGI" id="MGI:99558">
    <property type="gene designation" value="Pde4a"/>
</dbReference>
<dbReference type="VEuPathDB" id="HostDB:ENSMUSG00000032177"/>
<dbReference type="eggNOG" id="KOG3689">
    <property type="taxonomic scope" value="Eukaryota"/>
</dbReference>
<dbReference type="GeneTree" id="ENSGT00940000159788"/>
<dbReference type="HOGENOM" id="CLU_005940_5_0_1"/>
<dbReference type="InParanoid" id="O89084"/>
<dbReference type="OMA" id="DDQSRGH"/>
<dbReference type="OrthoDB" id="189220at2759"/>
<dbReference type="PhylomeDB" id="O89084"/>
<dbReference type="TreeFam" id="TF314638"/>
<dbReference type="BRENDA" id="3.1.4.53">
    <property type="organism ID" value="3474"/>
</dbReference>
<dbReference type="Reactome" id="R-MMU-180024">
    <property type="pathway name" value="DARPP-32 events"/>
</dbReference>
<dbReference type="Reactome" id="R-MMU-418555">
    <property type="pathway name" value="G alpha (s) signalling events"/>
</dbReference>
<dbReference type="UniPathway" id="UPA00762">
    <property type="reaction ID" value="UER00747"/>
</dbReference>
<dbReference type="BioGRID-ORCS" id="18577">
    <property type="hits" value="5 hits in 79 CRISPR screens"/>
</dbReference>
<dbReference type="ChiTaRS" id="Pde4a">
    <property type="organism name" value="mouse"/>
</dbReference>
<dbReference type="PRO" id="PR:O89084"/>
<dbReference type="Proteomes" id="UP000000589">
    <property type="component" value="Chromosome 9"/>
</dbReference>
<dbReference type="RNAct" id="O89084">
    <property type="molecule type" value="protein"/>
</dbReference>
<dbReference type="Bgee" id="ENSMUSG00000032177">
    <property type="expression patterns" value="Expressed in superior frontal gyrus and 146 other cell types or tissues"/>
</dbReference>
<dbReference type="ExpressionAtlas" id="O89084">
    <property type="expression patterns" value="baseline and differential"/>
</dbReference>
<dbReference type="GO" id="GO:0005737">
    <property type="term" value="C:cytoplasm"/>
    <property type="evidence" value="ECO:0000314"/>
    <property type="project" value="MGI"/>
</dbReference>
<dbReference type="GO" id="GO:0005829">
    <property type="term" value="C:cytosol"/>
    <property type="evidence" value="ECO:0000314"/>
    <property type="project" value="MGI"/>
</dbReference>
<dbReference type="GO" id="GO:0016020">
    <property type="term" value="C:membrane"/>
    <property type="evidence" value="ECO:0000314"/>
    <property type="project" value="MGI"/>
</dbReference>
<dbReference type="GO" id="GO:0005654">
    <property type="term" value="C:nucleoplasm"/>
    <property type="evidence" value="ECO:0007669"/>
    <property type="project" value="Ensembl"/>
</dbReference>
<dbReference type="GO" id="GO:0048471">
    <property type="term" value="C:perinuclear region of cytoplasm"/>
    <property type="evidence" value="ECO:0007669"/>
    <property type="project" value="Ensembl"/>
</dbReference>
<dbReference type="GO" id="GO:0005886">
    <property type="term" value="C:plasma membrane"/>
    <property type="evidence" value="ECO:0007669"/>
    <property type="project" value="Ensembl"/>
</dbReference>
<dbReference type="GO" id="GO:0004115">
    <property type="term" value="F:3',5'-cyclic-AMP phosphodiesterase activity"/>
    <property type="evidence" value="ECO:0000314"/>
    <property type="project" value="BHF-UCL"/>
</dbReference>
<dbReference type="GO" id="GO:0030552">
    <property type="term" value="F:cAMP binding"/>
    <property type="evidence" value="ECO:0007669"/>
    <property type="project" value="Ensembl"/>
</dbReference>
<dbReference type="GO" id="GO:0046872">
    <property type="term" value="F:metal ion binding"/>
    <property type="evidence" value="ECO:0007669"/>
    <property type="project" value="UniProtKB-KW"/>
</dbReference>
<dbReference type="GO" id="GO:0006198">
    <property type="term" value="P:cAMP catabolic process"/>
    <property type="evidence" value="ECO:0000314"/>
    <property type="project" value="UniProtKB"/>
</dbReference>
<dbReference type="GO" id="GO:0071466">
    <property type="term" value="P:cellular response to xenobiotic stimulus"/>
    <property type="evidence" value="ECO:0000314"/>
    <property type="project" value="MGI"/>
</dbReference>
<dbReference type="GO" id="GO:0106070">
    <property type="term" value="P:regulation of adenylate cyclase-activating G protein-coupled receptor signaling pathway"/>
    <property type="evidence" value="ECO:0000315"/>
    <property type="project" value="MGI"/>
</dbReference>
<dbReference type="GO" id="GO:0141161">
    <property type="term" value="P:regulation of cAMP/PKA signal transduction"/>
    <property type="evidence" value="ECO:0000315"/>
    <property type="project" value="MGI"/>
</dbReference>
<dbReference type="GO" id="GO:0007608">
    <property type="term" value="P:sensory perception of smell"/>
    <property type="evidence" value="ECO:0000316"/>
    <property type="project" value="MGI"/>
</dbReference>
<dbReference type="GO" id="GO:0007165">
    <property type="term" value="P:signal transduction"/>
    <property type="evidence" value="ECO:0007669"/>
    <property type="project" value="InterPro"/>
</dbReference>
<dbReference type="CDD" id="cd00077">
    <property type="entry name" value="HDc"/>
    <property type="match status" value="1"/>
</dbReference>
<dbReference type="FunFam" id="1.10.1300.10:FF:000001">
    <property type="entry name" value="Phosphodiesterase"/>
    <property type="match status" value="1"/>
</dbReference>
<dbReference type="Gene3D" id="1.10.1300.10">
    <property type="entry name" value="3'5'-cyclic nucleotide phosphodiesterase, catalytic domain"/>
    <property type="match status" value="1"/>
</dbReference>
<dbReference type="InterPro" id="IPR003607">
    <property type="entry name" value="HD/PDEase_dom"/>
</dbReference>
<dbReference type="InterPro" id="IPR040844">
    <property type="entry name" value="PDE4_UCR"/>
</dbReference>
<dbReference type="InterPro" id="IPR023088">
    <property type="entry name" value="PDEase"/>
</dbReference>
<dbReference type="InterPro" id="IPR002073">
    <property type="entry name" value="PDEase_catalytic_dom"/>
</dbReference>
<dbReference type="InterPro" id="IPR036971">
    <property type="entry name" value="PDEase_catalytic_dom_sf"/>
</dbReference>
<dbReference type="InterPro" id="IPR023174">
    <property type="entry name" value="PDEase_CS"/>
</dbReference>
<dbReference type="PANTHER" id="PTHR11347">
    <property type="entry name" value="CYCLIC NUCLEOTIDE PHOSPHODIESTERASE"/>
    <property type="match status" value="1"/>
</dbReference>
<dbReference type="Pfam" id="PF18100">
    <property type="entry name" value="PDE4_UCR"/>
    <property type="match status" value="1"/>
</dbReference>
<dbReference type="Pfam" id="PF00233">
    <property type="entry name" value="PDEase_I"/>
    <property type="match status" value="1"/>
</dbReference>
<dbReference type="PRINTS" id="PR00387">
    <property type="entry name" value="PDIESTERASE1"/>
</dbReference>
<dbReference type="SMART" id="SM00471">
    <property type="entry name" value="HDc"/>
    <property type="match status" value="1"/>
</dbReference>
<dbReference type="SUPFAM" id="SSF109604">
    <property type="entry name" value="HD-domain/PDEase-like"/>
    <property type="match status" value="1"/>
</dbReference>
<dbReference type="PROSITE" id="PS00126">
    <property type="entry name" value="PDEASE_I_1"/>
    <property type="match status" value="1"/>
</dbReference>
<dbReference type="PROSITE" id="PS51845">
    <property type="entry name" value="PDEASE_I_2"/>
    <property type="match status" value="1"/>
</dbReference>
<sequence>MEPPAAPSERSLSLSLPGPREGQATLKPPPQHLWRQPRTPIRIQQRGYSDSAERSEPERSPHRPIERADAVDTGDRPGLRTTRMSWPSSFHGTGTGGGSSRRLEAENGPTPSPGRSPLDSQASPGLMLHAGAATSQRRESFLYRSDSDYDMSPKTMSRNSSVASEAHGEDLIVTPFAQVLASLRNVRSNFSLLTNVPIPSNKRSPLGGPPSVCKATLSEETCQQLARETLEELDWCLEQLETMQTYRSVSEMASHKFKRMLNRELTHLSEMSRSGNQVSEYISNTFLDKQHEVEIPSPTPRQRPFQQPPPAAVQQAQPMSQITGLKKLVHTGSLNINVPRFGVKTDQEDLLAQELENLSKWGLNIFCVSEYAGGRSLSCIMYTIFQERDLLKKFHIPVDTMMTYMLTLEDHYHADVAYHNSLHAADVLQSTHVLLATPALDAVFTDLEILAALFAAAIHDVDHPGVSNQFLINTNSELALMYNDESVLENHHLAVGFKLLQEENCDIFQNLSKRQRQSLRKMVIDMVLATDMSKHMTLLADLKTMVETKKVTSSGVLLLDNYSDRIQVLRNMVHCADLSNPTKPLELYRQWTDRIMAEFFQQGDRERERGMEISPMCDKHTASVEKSQVGFIDYIVHPLWETWADLVHPDAQDILDTLEDNRDWYHSAIRQSPSPTLEEEPGVLSDPALPDKFQFELTLEEEDEEDSLEVPGLPCTEETLLAPHDTRAQAMEQSKVKGQSPAVVEVAESLKQETASAHGAPEESAEAVGHSFSLETSILPDLRTLSPSEEAQGLLGLPSMAAEVEAPRDHLAAMRACSACSGTSGDNSAVISAPGRWGSGGDPA</sequence>
<evidence type="ECO:0000250" key="1"/>
<evidence type="ECO:0000250" key="2">
    <source>
        <dbReference type="UniProtKB" id="P27815"/>
    </source>
</evidence>
<evidence type="ECO:0000250" key="3">
    <source>
        <dbReference type="UniProtKB" id="P54748"/>
    </source>
</evidence>
<evidence type="ECO:0000250" key="4">
    <source>
        <dbReference type="UniProtKB" id="Q07343"/>
    </source>
</evidence>
<evidence type="ECO:0000250" key="5">
    <source>
        <dbReference type="UniProtKB" id="Q08499"/>
    </source>
</evidence>
<evidence type="ECO:0000255" key="6">
    <source>
        <dbReference type="PROSITE-ProRule" id="PRU01192"/>
    </source>
</evidence>
<evidence type="ECO:0000256" key="7">
    <source>
        <dbReference type="SAM" id="MobiDB-lite"/>
    </source>
</evidence>
<evidence type="ECO:0000269" key="8">
    <source>
    </source>
</evidence>
<evidence type="ECO:0000303" key="9">
    <source>
    </source>
</evidence>
<evidence type="ECO:0000303" key="10">
    <source>
    </source>
</evidence>
<evidence type="ECO:0000303" key="11">
    <source>
    </source>
</evidence>
<evidence type="ECO:0000305" key="12"/>
<evidence type="ECO:0000305" key="13">
    <source>
    </source>
</evidence>
<evidence type="ECO:0007744" key="14">
    <source>
    </source>
</evidence>
<comment type="function">
    <text evidence="8">Hydrolyzes the second messenger 3',5'-cyclic AMP (cAMP), which is a key regulator of many important physiological processes.</text>
</comment>
<comment type="function">
    <molecule>Isoform 2</molecule>
    <text evidence="8">Efficiently hydrolyzes cAMP.</text>
</comment>
<comment type="catalytic activity">
    <molecule>Isoform 2</molecule>
    <reaction evidence="8">
        <text>3',5'-cyclic AMP + H2O = AMP + H(+)</text>
        <dbReference type="Rhea" id="RHEA:25277"/>
        <dbReference type="ChEBI" id="CHEBI:15377"/>
        <dbReference type="ChEBI" id="CHEBI:15378"/>
        <dbReference type="ChEBI" id="CHEBI:58165"/>
        <dbReference type="ChEBI" id="CHEBI:456215"/>
        <dbReference type="EC" id="3.1.4.53"/>
    </reaction>
    <physiologicalReaction direction="left-to-right" evidence="13">
        <dbReference type="Rhea" id="RHEA:25278"/>
    </physiologicalReaction>
</comment>
<comment type="cofactor">
    <cofactor evidence="2">
        <name>Zn(2+)</name>
        <dbReference type="ChEBI" id="CHEBI:29105"/>
    </cofactor>
    <text evidence="2">Binds 2 divalent metal cations per subunit. Site 1 may preferentially bind zinc ions.</text>
</comment>
<comment type="cofactor">
    <cofactor evidence="2">
        <name>Mg(2+)</name>
        <dbReference type="ChEBI" id="CHEBI:18420"/>
    </cofactor>
    <cofactor evidence="4">
        <name>Mn(2+)</name>
        <dbReference type="ChEBI" id="CHEBI:29035"/>
    </cofactor>
    <text evidence="2 4">Binds 2 divalent metal cations per subunit (By similarity). Site 2 has a preference for magnesium and/or manganese ions (By similarity).</text>
</comment>
<comment type="activity regulation">
    <molecule>Isoform 2</molecule>
    <text evidence="8">Inhibited by rolipram and diazepam.</text>
</comment>
<comment type="biophysicochemical properties">
    <kinetics>
        <KM evidence="8">9.2 uM for cAMP</KM>
        <Vmax evidence="8">37.9 nmol/min/mg enzyme toward cAMP</Vmax>
    </kinetics>
</comment>
<comment type="pathway">
    <text evidence="13">Purine metabolism; 3',5'-cyclic AMP degradation; AMP from 3',5'-cyclic AMP: step 1/1.</text>
</comment>
<comment type="subunit">
    <text evidence="2">Interacts with LYN (via SH3 domain). Interacts with ARRB2.</text>
</comment>
<comment type="subcellular location">
    <subcellularLocation>
        <location evidence="2">Cytoplasm</location>
        <location evidence="2">Cytosol</location>
    </subcellularLocation>
    <subcellularLocation>
        <location>Membrane</location>
        <topology evidence="2">Peripheral membrane protein</topology>
    </subcellularLocation>
</comment>
<comment type="alternative products">
    <event type="alternative splicing"/>
    <isoform>
        <id>O89084-1</id>
        <name>1</name>
        <sequence type="displayed"/>
    </isoform>
    <isoform>
        <id>O89084-2</id>
        <name>2</name>
        <name evidence="9">PDE4A1</name>
        <sequence type="described" ref="VSP_004563 VSP_004564"/>
    </isoform>
    <isoform>
        <id>O89084-3</id>
        <name>3</name>
        <sequence type="described" ref="VSP_004562"/>
    </isoform>
    <text>Additional isoforms seem to exist.</text>
</comment>
<comment type="PTM">
    <text evidence="2">Proteolytically cleaved by CASP3.</text>
</comment>
<comment type="similarity">
    <text evidence="12">Belongs to the cyclic nucleotide phosphodiesterase family. PDE4 subfamily.</text>
</comment>
<comment type="sequence caution" evidence="12">
    <conflict type="erroneous initiation">
        <sequence resource="EMBL-CDS" id="AAH27224"/>
    </conflict>
</comment>
<accession>O89084</accession>
<accession>Q8R078</accession>
<accession>Q9JHQ4</accession>
<accession>Q9QX48</accession>
<accession>Q9QX49</accession>
<accession>Q9QXI8</accession>
<feature type="chain" id="PRO_0000198807" description="3',5'-cyclic-AMP phosphodiesterase 4A">
    <location>
        <begin position="1"/>
        <end position="844"/>
    </location>
</feature>
<feature type="domain" description="PDEase" evidence="6">
    <location>
        <begin position="343"/>
        <end position="672"/>
    </location>
</feature>
<feature type="region of interest" description="Disordered" evidence="7">
    <location>
        <begin position="1"/>
        <end position="124"/>
    </location>
</feature>
<feature type="region of interest" description="Disordered" evidence="7">
    <location>
        <begin position="819"/>
        <end position="844"/>
    </location>
</feature>
<feature type="compositionally biased region" description="Low complexity" evidence="7">
    <location>
        <begin position="36"/>
        <end position="46"/>
    </location>
</feature>
<feature type="compositionally biased region" description="Basic and acidic residues" evidence="7">
    <location>
        <begin position="51"/>
        <end position="78"/>
    </location>
</feature>
<feature type="compositionally biased region" description="Polar residues" evidence="7">
    <location>
        <begin position="82"/>
        <end position="91"/>
    </location>
</feature>
<feature type="compositionally biased region" description="Polar residues" evidence="7">
    <location>
        <begin position="820"/>
        <end position="830"/>
    </location>
</feature>
<feature type="active site" description="Proton donor" evidence="4">
    <location>
        <position position="419"/>
    </location>
</feature>
<feature type="binding site" evidence="5">
    <location>
        <position position="419"/>
    </location>
    <ligand>
        <name>3',5'-cyclic AMP</name>
        <dbReference type="ChEBI" id="CHEBI:58165"/>
    </ligand>
</feature>
<feature type="binding site" evidence="4">
    <location>
        <position position="419"/>
    </location>
    <ligand>
        <name>AMP</name>
        <dbReference type="ChEBI" id="CHEBI:456215"/>
    </ligand>
</feature>
<feature type="binding site" evidence="4">
    <location>
        <position position="423"/>
    </location>
    <ligand>
        <name>AMP</name>
        <dbReference type="ChEBI" id="CHEBI:456215"/>
    </ligand>
</feature>
<feature type="binding site" evidence="2">
    <location>
        <position position="423"/>
    </location>
    <ligand>
        <name>Zn(2+)</name>
        <dbReference type="ChEBI" id="CHEBI:29105"/>
        <label>1</label>
    </ligand>
</feature>
<feature type="binding site" evidence="2">
    <location>
        <position position="459"/>
    </location>
    <ligand>
        <name>Zn(2+)</name>
        <dbReference type="ChEBI" id="CHEBI:29105"/>
        <label>1</label>
    </ligand>
</feature>
<feature type="binding site" evidence="4">
    <location>
        <position position="460"/>
    </location>
    <ligand>
        <name>AMP</name>
        <dbReference type="ChEBI" id="CHEBI:456215"/>
    </ligand>
</feature>
<feature type="binding site" evidence="2">
    <location>
        <position position="460"/>
    </location>
    <ligand>
        <name>Mg(2+)</name>
        <dbReference type="ChEBI" id="CHEBI:18420"/>
    </ligand>
</feature>
<feature type="binding site" evidence="4">
    <location>
        <position position="460"/>
    </location>
    <ligand>
        <name>Mn(2+)</name>
        <dbReference type="ChEBI" id="CHEBI:29035"/>
    </ligand>
</feature>
<feature type="binding site" evidence="2">
    <location>
        <position position="460"/>
    </location>
    <ligand>
        <name>Zn(2+)</name>
        <dbReference type="ChEBI" id="CHEBI:29105"/>
        <label>1</label>
    </ligand>
</feature>
<feature type="binding site" evidence="4">
    <location>
        <position position="460"/>
    </location>
    <ligand>
        <name>Zn(2+)</name>
        <dbReference type="ChEBI" id="CHEBI:29105"/>
        <label>2</label>
    </ligand>
</feature>
<feature type="binding site" evidence="4">
    <location>
        <position position="577"/>
    </location>
    <ligand>
        <name>AMP</name>
        <dbReference type="ChEBI" id="CHEBI:456215"/>
    </ligand>
</feature>
<feature type="binding site" evidence="2">
    <location>
        <position position="577"/>
    </location>
    <ligand>
        <name>Zn(2+)</name>
        <dbReference type="ChEBI" id="CHEBI:29105"/>
        <label>1</label>
    </ligand>
</feature>
<feature type="binding site" evidence="5">
    <location>
        <position position="628"/>
    </location>
    <ligand>
        <name>3',5'-cyclic AMP</name>
        <dbReference type="ChEBI" id="CHEBI:58165"/>
    </ligand>
</feature>
<feature type="binding site" evidence="4">
    <location>
        <position position="628"/>
    </location>
    <ligand>
        <name>AMP</name>
        <dbReference type="ChEBI" id="CHEBI:456215"/>
    </ligand>
</feature>
<feature type="binding site" evidence="5">
    <location>
        <position position="631"/>
    </location>
    <ligand>
        <name>3',5'-cyclic AMP</name>
        <dbReference type="ChEBI" id="CHEBI:58165"/>
    </ligand>
</feature>
<feature type="binding site" evidence="4">
    <location>
        <position position="631"/>
    </location>
    <ligand>
        <name>AMP</name>
        <dbReference type="ChEBI" id="CHEBI:456215"/>
    </ligand>
</feature>
<feature type="site" description="Cleavage; by caspase-3" evidence="2">
    <location>
        <begin position="69"/>
        <end position="70"/>
    </location>
</feature>
<feature type="modified residue" description="Phosphoserine" evidence="2">
    <location>
        <position position="13"/>
    </location>
</feature>
<feature type="modified residue" description="Phosphoserine" evidence="14">
    <location>
        <position position="147"/>
    </location>
</feature>
<feature type="modified residue" description="Phosphoserine" evidence="3">
    <location>
        <position position="152"/>
    </location>
</feature>
<feature type="modified residue" description="Phosphoserine" evidence="2">
    <location>
        <position position="160"/>
    </location>
</feature>
<feature type="modified residue" description="Phosphoserine" evidence="2">
    <location>
        <position position="204"/>
    </location>
</feature>
<feature type="modified residue" description="Phosphoserine" evidence="14">
    <location>
        <position position="333"/>
    </location>
</feature>
<feature type="modified residue" description="Phosphoserine" evidence="2">
    <location>
        <position position="672"/>
    </location>
</feature>
<feature type="modified residue" description="Phosphoserine" evidence="2">
    <location>
        <position position="674"/>
    </location>
</feature>
<feature type="cross-link" description="Glycyl lysine isopeptide (Lys-Gly) (interchain with G-Cter in SUMO)" evidence="1">
    <location>
        <position position="344"/>
    </location>
</feature>
<feature type="splice variant" id="VSP_004563" description="In isoform 2." evidence="9 11">
    <location>
        <begin position="1"/>
        <end position="234"/>
    </location>
</feature>
<feature type="splice variant" id="VSP_004562" description="In isoform 3." evidence="10">
    <original>MEPPAAPSERSLSLSLPGPREGQATLKPPPQHLWRQPRTPIRIQQRGYSDSAERSEPERSPHRPIERADAVDTGDRPGLRTTRMSWPSSFHGTGTGGGSSRR</original>
    <variation>MRSSAAPRARPRPPALALPLGPESLTHFSFSEEDTLRHPPGRCVS</variation>
    <location>
        <begin position="1"/>
        <end position="102"/>
    </location>
</feature>
<feature type="splice variant" id="VSP_004564" description="In isoform 2." evidence="9 11">
    <original>WCLEQLETMQTYRSVSEMASHK</original>
    <variation>MPLVDFFCETCSKPWLVGWWDQ</variation>
    <location>
        <begin position="235"/>
        <end position="256"/>
    </location>
</feature>
<feature type="sequence conflict" description="In Ref. 2; AAF19201." evidence="12" ref="2">
    <original>R</original>
    <variation>K</variation>
    <location>
        <position position="516"/>
    </location>
</feature>
<feature type="sequence conflict" description="In Ref. 3; AAH27224." evidence="12" ref="3">
    <original>S</original>
    <variation>G</variation>
    <location>
        <position position="685"/>
    </location>
</feature>
<organism>
    <name type="scientific">Mus musculus</name>
    <name type="common">Mouse</name>
    <dbReference type="NCBI Taxonomy" id="10090"/>
    <lineage>
        <taxon>Eukaryota</taxon>
        <taxon>Metazoa</taxon>
        <taxon>Chordata</taxon>
        <taxon>Craniata</taxon>
        <taxon>Vertebrata</taxon>
        <taxon>Euteleostomi</taxon>
        <taxon>Mammalia</taxon>
        <taxon>Eutheria</taxon>
        <taxon>Euarchontoglires</taxon>
        <taxon>Glires</taxon>
        <taxon>Rodentia</taxon>
        <taxon>Myomorpha</taxon>
        <taxon>Muroidea</taxon>
        <taxon>Muridae</taxon>
        <taxon>Murinae</taxon>
        <taxon>Mus</taxon>
        <taxon>Mus</taxon>
    </lineage>
</organism>
<name>PDE4A_MOUSE</name>